<name>NUOI_THEFY</name>
<keyword id="KW-0004">4Fe-4S</keyword>
<keyword id="KW-1003">Cell membrane</keyword>
<keyword id="KW-0408">Iron</keyword>
<keyword id="KW-0411">Iron-sulfur</keyword>
<keyword id="KW-0472">Membrane</keyword>
<keyword id="KW-0479">Metal-binding</keyword>
<keyword id="KW-0520">NAD</keyword>
<keyword id="KW-0874">Quinone</keyword>
<keyword id="KW-0677">Repeat</keyword>
<keyword id="KW-1278">Translocase</keyword>
<keyword id="KW-0830">Ubiquinone</keyword>
<sequence length="183" mass="20912">MLEWLNPVKGFGVTFHTMFKKVPTVEYPEVKAPTMPRFHGRHQLNRWPDGLEKCIGCELCAWACPADAIYVEAGDNTEEERYSPGERYGRVYQINYLRCILCGLCVEACPTRALTMTNEYELADDSRESLIYTKEQLLAPLQQGMEAPPHPMRLGETEKDYYRLGRDDNAAARADEQNSEAVQ</sequence>
<gene>
    <name evidence="1" type="primary">nuoI</name>
    <name type="ordered locus">Tfu_2687</name>
</gene>
<reference key="1">
    <citation type="journal article" date="2007" name="J. Bacteriol.">
        <title>Genome sequence and analysis of the soil cellulolytic actinomycete Thermobifida fusca YX.</title>
        <authorList>
            <person name="Lykidis A."/>
            <person name="Mavromatis K."/>
            <person name="Ivanova N."/>
            <person name="Anderson I."/>
            <person name="Land M."/>
            <person name="DiBartolo G."/>
            <person name="Martinez M."/>
            <person name="Lapidus A."/>
            <person name="Lucas S."/>
            <person name="Copeland A."/>
            <person name="Richardson P."/>
            <person name="Wilson D.B."/>
            <person name="Kyrpides N."/>
        </authorList>
    </citation>
    <scope>NUCLEOTIDE SEQUENCE [LARGE SCALE GENOMIC DNA]</scope>
    <source>
        <strain>YX</strain>
    </source>
</reference>
<comment type="function">
    <text evidence="1">NDH-1 shuttles electrons from NADH, via FMN and iron-sulfur (Fe-S) centers, to quinones in the respiratory chain. The immediate electron acceptor for the enzyme in this species is believed to be ubiquinone. Couples the redox reaction to proton translocation (for every two electrons transferred, four hydrogen ions are translocated across the cytoplasmic membrane), and thus conserves the redox energy in a proton gradient.</text>
</comment>
<comment type="catalytic activity">
    <reaction evidence="1">
        <text>a quinone + NADH + 5 H(+)(in) = a quinol + NAD(+) + 4 H(+)(out)</text>
        <dbReference type="Rhea" id="RHEA:57888"/>
        <dbReference type="ChEBI" id="CHEBI:15378"/>
        <dbReference type="ChEBI" id="CHEBI:24646"/>
        <dbReference type="ChEBI" id="CHEBI:57540"/>
        <dbReference type="ChEBI" id="CHEBI:57945"/>
        <dbReference type="ChEBI" id="CHEBI:132124"/>
    </reaction>
</comment>
<comment type="cofactor">
    <cofactor evidence="1">
        <name>[4Fe-4S] cluster</name>
        <dbReference type="ChEBI" id="CHEBI:49883"/>
    </cofactor>
    <text evidence="1">Binds 2 [4Fe-4S] clusters per subunit.</text>
</comment>
<comment type="subunit">
    <text evidence="1">NDH-1 is composed of 14 different subunits. Subunits NuoA, H, J, K, L, M, N constitute the membrane sector of the complex.</text>
</comment>
<comment type="subcellular location">
    <subcellularLocation>
        <location evidence="1">Cell membrane</location>
        <topology evidence="1">Peripheral membrane protein</topology>
    </subcellularLocation>
</comment>
<comment type="similarity">
    <text evidence="1">Belongs to the complex I 23 kDa subunit family.</text>
</comment>
<evidence type="ECO:0000255" key="1">
    <source>
        <dbReference type="HAMAP-Rule" id="MF_01351"/>
    </source>
</evidence>
<evidence type="ECO:0000256" key="2">
    <source>
        <dbReference type="SAM" id="MobiDB-lite"/>
    </source>
</evidence>
<feature type="chain" id="PRO_0000245754" description="NADH-quinone oxidoreductase subunit I">
    <location>
        <begin position="1"/>
        <end position="183"/>
    </location>
</feature>
<feature type="domain" description="4Fe-4S ferredoxin-type 1" evidence="1">
    <location>
        <begin position="44"/>
        <end position="74"/>
    </location>
</feature>
<feature type="domain" description="4Fe-4S ferredoxin-type 2" evidence="1">
    <location>
        <begin position="90"/>
        <end position="119"/>
    </location>
</feature>
<feature type="region of interest" description="Disordered" evidence="2">
    <location>
        <begin position="143"/>
        <end position="183"/>
    </location>
</feature>
<feature type="compositionally biased region" description="Basic and acidic residues" evidence="2">
    <location>
        <begin position="153"/>
        <end position="176"/>
    </location>
</feature>
<feature type="binding site" evidence="1">
    <location>
        <position position="54"/>
    </location>
    <ligand>
        <name>[4Fe-4S] cluster</name>
        <dbReference type="ChEBI" id="CHEBI:49883"/>
        <label>1</label>
    </ligand>
</feature>
<feature type="binding site" evidence="1">
    <location>
        <position position="57"/>
    </location>
    <ligand>
        <name>[4Fe-4S] cluster</name>
        <dbReference type="ChEBI" id="CHEBI:49883"/>
        <label>1</label>
    </ligand>
</feature>
<feature type="binding site" evidence="1">
    <location>
        <position position="60"/>
    </location>
    <ligand>
        <name>[4Fe-4S] cluster</name>
        <dbReference type="ChEBI" id="CHEBI:49883"/>
        <label>1</label>
    </ligand>
</feature>
<feature type="binding site" evidence="1">
    <location>
        <position position="64"/>
    </location>
    <ligand>
        <name>[4Fe-4S] cluster</name>
        <dbReference type="ChEBI" id="CHEBI:49883"/>
        <label>2</label>
    </ligand>
</feature>
<feature type="binding site" evidence="1">
    <location>
        <position position="99"/>
    </location>
    <ligand>
        <name>[4Fe-4S] cluster</name>
        <dbReference type="ChEBI" id="CHEBI:49883"/>
        <label>2</label>
    </ligand>
</feature>
<feature type="binding site" evidence="1">
    <location>
        <position position="102"/>
    </location>
    <ligand>
        <name>[4Fe-4S] cluster</name>
        <dbReference type="ChEBI" id="CHEBI:49883"/>
        <label>2</label>
    </ligand>
</feature>
<feature type="binding site" evidence="1">
    <location>
        <position position="105"/>
    </location>
    <ligand>
        <name>[4Fe-4S] cluster</name>
        <dbReference type="ChEBI" id="CHEBI:49883"/>
        <label>2</label>
    </ligand>
</feature>
<feature type="binding site" evidence="1">
    <location>
        <position position="109"/>
    </location>
    <ligand>
        <name>[4Fe-4S] cluster</name>
        <dbReference type="ChEBI" id="CHEBI:49883"/>
        <label>1</label>
    </ligand>
</feature>
<dbReference type="EC" id="7.1.1.-" evidence="1"/>
<dbReference type="EMBL" id="CP000088">
    <property type="protein sequence ID" value="AAZ56720.1"/>
    <property type="molecule type" value="Genomic_DNA"/>
</dbReference>
<dbReference type="RefSeq" id="WP_011293110.1">
    <property type="nucleotide sequence ID" value="NC_007333.1"/>
</dbReference>
<dbReference type="SMR" id="Q47LF2"/>
<dbReference type="STRING" id="269800.Tfu_2687"/>
<dbReference type="KEGG" id="tfu:Tfu_2687"/>
<dbReference type="eggNOG" id="COG1143">
    <property type="taxonomic scope" value="Bacteria"/>
</dbReference>
<dbReference type="HOGENOM" id="CLU_067218_4_0_11"/>
<dbReference type="OrthoDB" id="9808559at2"/>
<dbReference type="GO" id="GO:0005886">
    <property type="term" value="C:plasma membrane"/>
    <property type="evidence" value="ECO:0007669"/>
    <property type="project" value="UniProtKB-SubCell"/>
</dbReference>
<dbReference type="GO" id="GO:0051539">
    <property type="term" value="F:4 iron, 4 sulfur cluster binding"/>
    <property type="evidence" value="ECO:0007669"/>
    <property type="project" value="UniProtKB-KW"/>
</dbReference>
<dbReference type="GO" id="GO:0005506">
    <property type="term" value="F:iron ion binding"/>
    <property type="evidence" value="ECO:0007669"/>
    <property type="project" value="UniProtKB-UniRule"/>
</dbReference>
<dbReference type="GO" id="GO:0050136">
    <property type="term" value="F:NADH:ubiquinone reductase (non-electrogenic) activity"/>
    <property type="evidence" value="ECO:0007669"/>
    <property type="project" value="UniProtKB-UniRule"/>
</dbReference>
<dbReference type="GO" id="GO:0048038">
    <property type="term" value="F:quinone binding"/>
    <property type="evidence" value="ECO:0007669"/>
    <property type="project" value="UniProtKB-KW"/>
</dbReference>
<dbReference type="GO" id="GO:0009060">
    <property type="term" value="P:aerobic respiration"/>
    <property type="evidence" value="ECO:0007669"/>
    <property type="project" value="TreeGrafter"/>
</dbReference>
<dbReference type="FunFam" id="3.30.70.3270:FF:000007">
    <property type="entry name" value="NADH-quinone oxidoreductase subunit I"/>
    <property type="match status" value="1"/>
</dbReference>
<dbReference type="Gene3D" id="3.30.70.3270">
    <property type="match status" value="1"/>
</dbReference>
<dbReference type="HAMAP" id="MF_01351">
    <property type="entry name" value="NDH1_NuoI"/>
    <property type="match status" value="1"/>
</dbReference>
<dbReference type="InterPro" id="IPR017896">
    <property type="entry name" value="4Fe4S_Fe-S-bd"/>
</dbReference>
<dbReference type="InterPro" id="IPR017900">
    <property type="entry name" value="4Fe4S_Fe_S_CS"/>
</dbReference>
<dbReference type="InterPro" id="IPR010226">
    <property type="entry name" value="NADH_quinone_OxRdtase_chainI"/>
</dbReference>
<dbReference type="NCBIfam" id="TIGR01971">
    <property type="entry name" value="NuoI"/>
    <property type="match status" value="1"/>
</dbReference>
<dbReference type="NCBIfam" id="NF004537">
    <property type="entry name" value="PRK05888.1-3"/>
    <property type="match status" value="1"/>
</dbReference>
<dbReference type="PANTHER" id="PTHR10849:SF20">
    <property type="entry name" value="NADH DEHYDROGENASE [UBIQUINONE] IRON-SULFUR PROTEIN 8, MITOCHONDRIAL"/>
    <property type="match status" value="1"/>
</dbReference>
<dbReference type="PANTHER" id="PTHR10849">
    <property type="entry name" value="NADH DEHYDROGENASE UBIQUINONE IRON-SULFUR PROTEIN 8, MITOCHONDRIAL"/>
    <property type="match status" value="1"/>
</dbReference>
<dbReference type="Pfam" id="PF12838">
    <property type="entry name" value="Fer4_7"/>
    <property type="match status" value="1"/>
</dbReference>
<dbReference type="SUPFAM" id="SSF54862">
    <property type="entry name" value="4Fe-4S ferredoxins"/>
    <property type="match status" value="1"/>
</dbReference>
<dbReference type="PROSITE" id="PS00198">
    <property type="entry name" value="4FE4S_FER_1"/>
    <property type="match status" value="2"/>
</dbReference>
<dbReference type="PROSITE" id="PS51379">
    <property type="entry name" value="4FE4S_FER_2"/>
    <property type="match status" value="2"/>
</dbReference>
<proteinExistence type="inferred from homology"/>
<accession>Q47LF2</accession>
<protein>
    <recommendedName>
        <fullName evidence="1">NADH-quinone oxidoreductase subunit I</fullName>
        <ecNumber evidence="1">7.1.1.-</ecNumber>
    </recommendedName>
    <alternativeName>
        <fullName evidence="1">NADH dehydrogenase I subunit I</fullName>
    </alternativeName>
    <alternativeName>
        <fullName evidence="1">NDH-1 subunit I</fullName>
    </alternativeName>
</protein>
<organism>
    <name type="scientific">Thermobifida fusca (strain YX)</name>
    <dbReference type="NCBI Taxonomy" id="269800"/>
    <lineage>
        <taxon>Bacteria</taxon>
        <taxon>Bacillati</taxon>
        <taxon>Actinomycetota</taxon>
        <taxon>Actinomycetes</taxon>
        <taxon>Streptosporangiales</taxon>
        <taxon>Nocardiopsidaceae</taxon>
        <taxon>Thermobifida</taxon>
    </lineage>
</organism>